<evidence type="ECO:0000255" key="1"/>
<evidence type="ECO:0000269" key="2">
    <source>
    </source>
</evidence>
<evidence type="ECO:0000269" key="3">
    <source>
    </source>
</evidence>
<evidence type="ECO:0000269" key="4">
    <source>
    </source>
</evidence>
<evidence type="ECO:0000269" key="5">
    <source>
    </source>
</evidence>
<evidence type="ECO:0000269" key="6">
    <source>
    </source>
</evidence>
<evidence type="ECO:0000303" key="7">
    <source>
    </source>
</evidence>
<evidence type="ECO:0000303" key="8">
    <source>
    </source>
</evidence>
<evidence type="ECO:0000305" key="9"/>
<evidence type="ECO:0000305" key="10">
    <source>
    </source>
</evidence>
<evidence type="ECO:0000305" key="11">
    <source>
    </source>
</evidence>
<evidence type="ECO:0007744" key="12">
    <source>
    </source>
</evidence>
<feature type="initiator methionine" description="Removed" evidence="2 5">
    <location>
        <position position="1"/>
    </location>
</feature>
<feature type="chain" id="PRO_0000131033" description="Small ribosomal subunit protein uS14B">
    <location>
        <begin position="2"/>
        <end position="56"/>
    </location>
</feature>
<feature type="binding site" evidence="1">
    <location>
        <position position="21"/>
    </location>
    <ligand>
        <name>Zn(2+)</name>
        <dbReference type="ChEBI" id="CHEBI:29105"/>
    </ligand>
</feature>
<feature type="binding site" evidence="1">
    <location>
        <position position="24"/>
    </location>
    <ligand>
        <name>Zn(2+)</name>
        <dbReference type="ChEBI" id="CHEBI:29105"/>
    </ligand>
</feature>
<feature type="binding site" evidence="1">
    <location>
        <position position="39"/>
    </location>
    <ligand>
        <name>Zn(2+)</name>
        <dbReference type="ChEBI" id="CHEBI:29105"/>
    </ligand>
</feature>
<feature type="binding site" evidence="1">
    <location>
        <position position="42"/>
    </location>
    <ligand>
        <name>Zn(2+)</name>
        <dbReference type="ChEBI" id="CHEBI:29105"/>
    </ligand>
</feature>
<feature type="modified residue" description="Phosphoserine" evidence="12">
    <location>
        <position position="25"/>
    </location>
</feature>
<feature type="sequence conflict" description="In Ref. 5; AA sequence." evidence="9" ref="5">
    <original>W</original>
    <variation>G</variation>
    <location>
        <position position="7"/>
    </location>
</feature>
<proteinExistence type="evidence at protein level"/>
<name>RS29B_YEAST</name>
<organism>
    <name type="scientific">Saccharomyces cerevisiae (strain ATCC 204508 / S288c)</name>
    <name type="common">Baker's yeast</name>
    <dbReference type="NCBI Taxonomy" id="559292"/>
    <lineage>
        <taxon>Eukaryota</taxon>
        <taxon>Fungi</taxon>
        <taxon>Dikarya</taxon>
        <taxon>Ascomycota</taxon>
        <taxon>Saccharomycotina</taxon>
        <taxon>Saccharomycetes</taxon>
        <taxon>Saccharomycetales</taxon>
        <taxon>Saccharomycetaceae</taxon>
        <taxon>Saccharomyces</taxon>
    </lineage>
</organism>
<gene>
    <name evidence="8" type="primary">RPS29B</name>
    <name type="synonym">RPS36B</name>
    <name type="synonym">YS29B</name>
    <name type="ordered locus">YDL061C</name>
</gene>
<comment type="function">
    <text evidence="10">Component of the ribosome, a large ribonucleoprotein complex responsible for the synthesis of proteins in the cell. The small ribosomal subunit (SSU) binds messenger RNAs (mRNAs) and translates the encoded message by selecting cognate aminoacyl-transfer RNA (tRNA) molecules. The large subunit (LSU) contains the ribosomal catalytic site termed the peptidyl transferase center (PTC), which catalyzes the formation of peptide bonds, thereby polymerizing the amino acids delivered by tRNAs into a polypeptide chain. The nascent polypeptides leave the ribosome through a tunnel in the LSU and interact with protein factors that function in enzymatic processing, targeting, and the membrane insertion of nascent chains at the exit of the ribosomal tunnel.</text>
</comment>
<comment type="cofactor">
    <cofactor evidence="9">
        <name>Zn(2+)</name>
        <dbReference type="ChEBI" id="CHEBI:29105"/>
    </cofactor>
    <text evidence="9">Binds 1 zinc ion per subunit.</text>
</comment>
<comment type="subunit">
    <text evidence="6 11">Component of the small ribosomal subunit (SSU). Mature yeast ribosomes consist of a small (40S) and a large (60S) subunit. The 40S small subunit contains 1 molecule of ribosomal RNA (18S rRNA) and 33 different proteins (encoded by 57 genes). The large 60S subunit contains 3 rRNA molecules (25S, 5.8S and 5S rRNA) and 46 different proteins (encoded by 81 genes) (PubMed:22096102, PubMed:9559554).</text>
</comment>
<comment type="subcellular location">
    <subcellularLocation>
        <location evidence="3 6">Cytoplasm</location>
    </subcellularLocation>
</comment>
<comment type="miscellaneous">
    <text evidence="4">Present with 5410 molecules/cell in log phase SD medium.</text>
</comment>
<comment type="miscellaneous">
    <text evidence="9">There are 2 genes for uS14 in yeast.</text>
</comment>
<comment type="similarity">
    <text evidence="9">Belongs to the universal ribosomal protein uS14 family.</text>
</comment>
<dbReference type="EMBL" id="D14677">
    <property type="protein sequence ID" value="BAA03508.1"/>
    <property type="molecule type" value="Genomic_DNA"/>
</dbReference>
<dbReference type="EMBL" id="Z74109">
    <property type="protein sequence ID" value="CAA98624.1"/>
    <property type="molecule type" value="Genomic_DNA"/>
</dbReference>
<dbReference type="EMBL" id="EF123148">
    <property type="protein sequence ID" value="ABM97492.1"/>
    <property type="molecule type" value="mRNA"/>
</dbReference>
<dbReference type="EMBL" id="BK006938">
    <property type="protein sequence ID" value="DAA11795.1"/>
    <property type="molecule type" value="Genomic_DNA"/>
</dbReference>
<dbReference type="PIR" id="S48504">
    <property type="entry name" value="S48504"/>
</dbReference>
<dbReference type="RefSeq" id="NP_010222.1">
    <property type="nucleotide sequence ID" value="NM_001180120.1"/>
</dbReference>
<dbReference type="PDB" id="4V4B">
    <property type="method" value="EM"/>
    <property type="resolution" value="11.70 A"/>
    <property type="chains" value="AN=21-56"/>
</dbReference>
<dbReference type="PDB" id="4V92">
    <property type="method" value="EM"/>
    <property type="resolution" value="3.70 A"/>
    <property type="chains" value="d=5-56"/>
</dbReference>
<dbReference type="PDBsum" id="4V4B"/>
<dbReference type="PDBsum" id="4V92"/>
<dbReference type="SMR" id="P41058"/>
<dbReference type="BioGRID" id="31997">
    <property type="interactions" value="271"/>
</dbReference>
<dbReference type="ComplexPortal" id="CPX-1599">
    <property type="entry name" value="40S cytosolic small ribosomal subunit"/>
</dbReference>
<dbReference type="DIP" id="DIP-5230N"/>
<dbReference type="FunCoup" id="P41058">
    <property type="interactions" value="946"/>
</dbReference>
<dbReference type="IntAct" id="P41058">
    <property type="interactions" value="62"/>
</dbReference>
<dbReference type="STRING" id="4932.YDL061C"/>
<dbReference type="CarbonylDB" id="P41058"/>
<dbReference type="iPTMnet" id="P41058"/>
<dbReference type="PaxDb" id="4932-YDL061C"/>
<dbReference type="PeptideAtlas" id="P41058"/>
<dbReference type="EnsemblFungi" id="YDL061C_mRNA">
    <property type="protein sequence ID" value="YDL061C"/>
    <property type="gene ID" value="YDL061C"/>
</dbReference>
<dbReference type="GeneID" id="851498"/>
<dbReference type="KEGG" id="sce:YDL061C"/>
<dbReference type="AGR" id="SGD:S000002219"/>
<dbReference type="SGD" id="S000002219">
    <property type="gene designation" value="RPS29B"/>
</dbReference>
<dbReference type="VEuPathDB" id="FungiDB:YDL061C"/>
<dbReference type="eggNOG" id="KOG3506">
    <property type="taxonomic scope" value="Eukaryota"/>
</dbReference>
<dbReference type="GeneTree" id="ENSGT00940000170141"/>
<dbReference type="HOGENOM" id="CLU_177289_1_1_1"/>
<dbReference type="InParanoid" id="P41058"/>
<dbReference type="OMA" id="HCFREIA"/>
<dbReference type="OrthoDB" id="10252683at2759"/>
<dbReference type="BioCyc" id="YEAST:G3O-29477-MONOMER"/>
<dbReference type="BioGRID-ORCS" id="851498">
    <property type="hits" value="2 hits in 10 CRISPR screens"/>
</dbReference>
<dbReference type="PRO" id="PR:P41058"/>
<dbReference type="Proteomes" id="UP000002311">
    <property type="component" value="Chromosome IV"/>
</dbReference>
<dbReference type="RNAct" id="P41058">
    <property type="molecule type" value="protein"/>
</dbReference>
<dbReference type="GO" id="GO:0005829">
    <property type="term" value="C:cytosol"/>
    <property type="evidence" value="ECO:0000304"/>
    <property type="project" value="Reactome"/>
</dbReference>
<dbReference type="GO" id="GO:0022627">
    <property type="term" value="C:cytosolic small ribosomal subunit"/>
    <property type="evidence" value="ECO:0000314"/>
    <property type="project" value="SGD"/>
</dbReference>
<dbReference type="GO" id="GO:0003735">
    <property type="term" value="F:structural constituent of ribosome"/>
    <property type="evidence" value="ECO:0000314"/>
    <property type="project" value="SGD"/>
</dbReference>
<dbReference type="GO" id="GO:0008270">
    <property type="term" value="F:zinc ion binding"/>
    <property type="evidence" value="ECO:0000318"/>
    <property type="project" value="GO_Central"/>
</dbReference>
<dbReference type="GO" id="GO:0002181">
    <property type="term" value="P:cytoplasmic translation"/>
    <property type="evidence" value="ECO:0000318"/>
    <property type="project" value="GO_Central"/>
</dbReference>
<dbReference type="FunFam" id="4.10.830.10:FF:000002">
    <property type="entry name" value="40S ribosomal protein S29"/>
    <property type="match status" value="1"/>
</dbReference>
<dbReference type="Gene3D" id="4.10.830.10">
    <property type="entry name" value="30s Ribosomal Protein S14, Chain N"/>
    <property type="match status" value="1"/>
</dbReference>
<dbReference type="InterPro" id="IPR001209">
    <property type="entry name" value="Ribosomal_uS14"/>
</dbReference>
<dbReference type="InterPro" id="IPR018271">
    <property type="entry name" value="Ribosomal_uS14_CS"/>
</dbReference>
<dbReference type="InterPro" id="IPR039744">
    <property type="entry name" value="RIbosomal_uS14_euk_arc"/>
</dbReference>
<dbReference type="InterPro" id="IPR043140">
    <property type="entry name" value="Ribosomal_uS14_sf"/>
</dbReference>
<dbReference type="NCBIfam" id="NF004424">
    <property type="entry name" value="PRK05766.1"/>
    <property type="match status" value="1"/>
</dbReference>
<dbReference type="PANTHER" id="PTHR12010">
    <property type="entry name" value="40S RIBOSOMAL PROTEIN S29"/>
    <property type="match status" value="1"/>
</dbReference>
<dbReference type="PANTHER" id="PTHR12010:SF2">
    <property type="entry name" value="40S RIBOSOMAL PROTEIN S29"/>
    <property type="match status" value="1"/>
</dbReference>
<dbReference type="Pfam" id="PF00253">
    <property type="entry name" value="Ribosomal_S14"/>
    <property type="match status" value="1"/>
</dbReference>
<dbReference type="PROSITE" id="PS00527">
    <property type="entry name" value="RIBOSOMAL_S14"/>
    <property type="match status" value="1"/>
</dbReference>
<reference key="1">
    <citation type="submission" date="1993-03" db="EMBL/GenBank/DDBJ databases">
        <title>S.cerevisiae YS29B gene for ribosomal protein YS29.</title>
        <authorList>
            <person name="Suzuki K."/>
            <person name="Otaka E."/>
        </authorList>
    </citation>
    <scope>NUCLEOTIDE SEQUENCE [GENOMIC DNA]</scope>
</reference>
<reference key="2">
    <citation type="journal article" date="1997" name="Nature">
        <title>The nucleotide sequence of Saccharomyces cerevisiae chromosome IV.</title>
        <authorList>
            <person name="Jacq C."/>
            <person name="Alt-Moerbe J."/>
            <person name="Andre B."/>
            <person name="Arnold W."/>
            <person name="Bahr A."/>
            <person name="Ballesta J.P.G."/>
            <person name="Bargues M."/>
            <person name="Baron L."/>
            <person name="Becker A."/>
            <person name="Biteau N."/>
            <person name="Bloecker H."/>
            <person name="Blugeon C."/>
            <person name="Boskovic J."/>
            <person name="Brandt P."/>
            <person name="Brueckner M."/>
            <person name="Buitrago M.J."/>
            <person name="Coster F."/>
            <person name="Delaveau T."/>
            <person name="del Rey F."/>
            <person name="Dujon B."/>
            <person name="Eide L.G."/>
            <person name="Garcia-Cantalejo J.M."/>
            <person name="Goffeau A."/>
            <person name="Gomez-Peris A."/>
            <person name="Granotier C."/>
            <person name="Hanemann V."/>
            <person name="Hankeln T."/>
            <person name="Hoheisel J.D."/>
            <person name="Jaeger W."/>
            <person name="Jimenez A."/>
            <person name="Jonniaux J.-L."/>
            <person name="Kraemer C."/>
            <person name="Kuester H."/>
            <person name="Laamanen P."/>
            <person name="Legros Y."/>
            <person name="Louis E.J."/>
            <person name="Moeller-Rieker S."/>
            <person name="Monnet A."/>
            <person name="Moro M."/>
            <person name="Mueller-Auer S."/>
            <person name="Nussbaumer B."/>
            <person name="Paricio N."/>
            <person name="Paulin L."/>
            <person name="Perea J."/>
            <person name="Perez-Alonso M."/>
            <person name="Perez-Ortin J.E."/>
            <person name="Pohl T.M."/>
            <person name="Prydz H."/>
            <person name="Purnelle B."/>
            <person name="Rasmussen S.W."/>
            <person name="Remacha M.A."/>
            <person name="Revuelta J.L."/>
            <person name="Rieger M."/>
            <person name="Salom D."/>
            <person name="Saluz H.P."/>
            <person name="Saiz J.E."/>
            <person name="Saren A.-M."/>
            <person name="Schaefer M."/>
            <person name="Scharfe M."/>
            <person name="Schmidt E.R."/>
            <person name="Schneider C."/>
            <person name="Scholler P."/>
            <person name="Schwarz S."/>
            <person name="Soler-Mira A."/>
            <person name="Urrestarazu L.A."/>
            <person name="Verhasselt P."/>
            <person name="Vissers S."/>
            <person name="Voet M."/>
            <person name="Volckaert G."/>
            <person name="Wagner G."/>
            <person name="Wambutt R."/>
            <person name="Wedler E."/>
            <person name="Wedler H."/>
            <person name="Woelfl S."/>
            <person name="Harris D.E."/>
            <person name="Bowman S."/>
            <person name="Brown D."/>
            <person name="Churcher C.M."/>
            <person name="Connor R."/>
            <person name="Dedman K."/>
            <person name="Gentles S."/>
            <person name="Hamlin N."/>
            <person name="Hunt S."/>
            <person name="Jones L."/>
            <person name="McDonald S."/>
            <person name="Murphy L.D."/>
            <person name="Niblett D."/>
            <person name="Odell C."/>
            <person name="Oliver K."/>
            <person name="Rajandream M.A."/>
            <person name="Richards C."/>
            <person name="Shore L."/>
            <person name="Walsh S.V."/>
            <person name="Barrell B.G."/>
            <person name="Dietrich F.S."/>
            <person name="Mulligan J.T."/>
            <person name="Allen E."/>
            <person name="Araujo R."/>
            <person name="Aviles E."/>
            <person name="Berno A."/>
            <person name="Carpenter J."/>
            <person name="Chen E."/>
            <person name="Cherry J.M."/>
            <person name="Chung E."/>
            <person name="Duncan M."/>
            <person name="Hunicke-Smith S."/>
            <person name="Hyman R.W."/>
            <person name="Komp C."/>
            <person name="Lashkari D."/>
            <person name="Lew H."/>
            <person name="Lin D."/>
            <person name="Mosedale D."/>
            <person name="Nakahara K."/>
            <person name="Namath A."/>
            <person name="Oefner P."/>
            <person name="Oh C."/>
            <person name="Petel F.X."/>
            <person name="Roberts D."/>
            <person name="Schramm S."/>
            <person name="Schroeder M."/>
            <person name="Shogren T."/>
            <person name="Shroff N."/>
            <person name="Winant A."/>
            <person name="Yelton M.A."/>
            <person name="Botstein D."/>
            <person name="Davis R.W."/>
            <person name="Johnston M."/>
            <person name="Andrews S."/>
            <person name="Brinkman R."/>
            <person name="Cooper J."/>
            <person name="Ding H."/>
            <person name="Du Z."/>
            <person name="Favello A."/>
            <person name="Fulton L."/>
            <person name="Gattung S."/>
            <person name="Greco T."/>
            <person name="Hallsworth K."/>
            <person name="Hawkins J."/>
            <person name="Hillier L.W."/>
            <person name="Jier M."/>
            <person name="Johnson D."/>
            <person name="Johnston L."/>
            <person name="Kirsten J."/>
            <person name="Kucaba T."/>
            <person name="Langston Y."/>
            <person name="Latreille P."/>
            <person name="Le T."/>
            <person name="Mardis E."/>
            <person name="Menezes S."/>
            <person name="Miller N."/>
            <person name="Nhan M."/>
            <person name="Pauley A."/>
            <person name="Peluso D."/>
            <person name="Rifkin L."/>
            <person name="Riles L."/>
            <person name="Taich A."/>
            <person name="Trevaskis E."/>
            <person name="Vignati D."/>
            <person name="Wilcox L."/>
            <person name="Wohldman P."/>
            <person name="Vaudin M."/>
            <person name="Wilson R."/>
            <person name="Waterston R."/>
            <person name="Albermann K."/>
            <person name="Hani J."/>
            <person name="Heumann K."/>
            <person name="Kleine K."/>
            <person name="Mewes H.-W."/>
            <person name="Zollner A."/>
            <person name="Zaccaria P."/>
        </authorList>
    </citation>
    <scope>NUCLEOTIDE SEQUENCE [LARGE SCALE GENOMIC DNA]</scope>
    <source>
        <strain>ATCC 204508 / S288c</strain>
    </source>
</reference>
<reference key="3">
    <citation type="journal article" date="2014" name="G3 (Bethesda)">
        <title>The reference genome sequence of Saccharomyces cerevisiae: Then and now.</title>
        <authorList>
            <person name="Engel S.R."/>
            <person name="Dietrich F.S."/>
            <person name="Fisk D.G."/>
            <person name="Binkley G."/>
            <person name="Balakrishnan R."/>
            <person name="Costanzo M.C."/>
            <person name="Dwight S.S."/>
            <person name="Hitz B.C."/>
            <person name="Karra K."/>
            <person name="Nash R.S."/>
            <person name="Weng S."/>
            <person name="Wong E.D."/>
            <person name="Lloyd P."/>
            <person name="Skrzypek M.S."/>
            <person name="Miyasato S.R."/>
            <person name="Simison M."/>
            <person name="Cherry J.M."/>
        </authorList>
    </citation>
    <scope>GENOME REANNOTATION</scope>
    <source>
        <strain>ATCC 204508 / S288c</strain>
    </source>
</reference>
<reference key="4">
    <citation type="journal article" date="2007" name="Proc. Natl. Acad. Sci. U.S.A.">
        <title>High-density yeast-tiling array reveals previously undiscovered introns and extensive regulation of meiotic splicing.</title>
        <authorList>
            <person name="Juneau K."/>
            <person name="Palm C."/>
            <person name="Miranda M."/>
            <person name="Davis R.W."/>
        </authorList>
    </citation>
    <scope>NUCLEOTIDE SEQUENCE [MRNA] OF 1-30</scope>
    <source>
        <strain>ATCC 201390 / BY4743</strain>
    </source>
</reference>
<reference key="5">
    <citation type="journal article" date="1984" name="Mol. Gen. Genet.">
        <title>Yeast ribosomal proteins. VIII. Isolation of two proteins and sequence characterization of twenty-four proteins from cytoplasmic ribosomes.</title>
        <authorList>
            <person name="Otaka E."/>
            <person name="Higo K."/>
            <person name="Itoh T."/>
        </authorList>
    </citation>
    <scope>PROTEIN SEQUENCE OF 2-10</scope>
    <scope>CLEAVAGE OF INITIATOR METHIONINE</scope>
</reference>
<reference key="6">
    <citation type="journal article" date="1998" name="Yeast">
        <title>The list of cytoplasmic ribosomal proteins of Saccharomyces cerevisiae.</title>
        <authorList>
            <person name="Planta R.J."/>
            <person name="Mager W.H."/>
        </authorList>
    </citation>
    <scope>NOMENCLATURE</scope>
    <scope>SUBUNIT</scope>
</reference>
<reference key="7">
    <citation type="journal article" date="1999" name="J. Biol. Chem.">
        <title>The action of N-terminal acetyltransferases on yeast ribosomal proteins.</title>
        <authorList>
            <person name="Arnold R.J."/>
            <person name="Polevoda B."/>
            <person name="Reilly J.P."/>
            <person name="Sherman F."/>
        </authorList>
    </citation>
    <scope>CLEAVAGE OF INITIATOR METHIONINE</scope>
</reference>
<reference key="8">
    <citation type="journal article" date="2003" name="Nature">
        <title>Global analysis of protein localization in budding yeast.</title>
        <authorList>
            <person name="Huh W.-K."/>
            <person name="Falvo J.V."/>
            <person name="Gerke L.C."/>
            <person name="Carroll A.S."/>
            <person name="Howson R.W."/>
            <person name="Weissman J.S."/>
            <person name="O'Shea E.K."/>
        </authorList>
    </citation>
    <scope>SUBCELLULAR LOCATION [LARGE SCALE ANALYSIS]</scope>
</reference>
<reference key="9">
    <citation type="journal article" date="2003" name="Nature">
        <title>Global analysis of protein expression in yeast.</title>
        <authorList>
            <person name="Ghaemmaghami S."/>
            <person name="Huh W.-K."/>
            <person name="Bower K."/>
            <person name="Howson R.W."/>
            <person name="Belle A."/>
            <person name="Dephoure N."/>
            <person name="O'Shea E.K."/>
            <person name="Weissman J.S."/>
        </authorList>
    </citation>
    <scope>LEVEL OF PROTEIN EXPRESSION [LARGE SCALE ANALYSIS]</scope>
</reference>
<reference key="10">
    <citation type="journal article" date="2009" name="Science">
        <title>Global analysis of Cdk1 substrate phosphorylation sites provides insights into evolution.</title>
        <authorList>
            <person name="Holt L.J."/>
            <person name="Tuch B.B."/>
            <person name="Villen J."/>
            <person name="Johnson A.D."/>
            <person name="Gygi S.P."/>
            <person name="Morgan D.O."/>
        </authorList>
    </citation>
    <scope>PHOSPHORYLATION [LARGE SCALE ANALYSIS] AT SER-25</scope>
    <scope>IDENTIFICATION BY MASS SPECTROMETRY [LARGE SCALE ANALYSIS]</scope>
</reference>
<reference key="11">
    <citation type="journal article" date="2011" name="Science">
        <title>The structure of the eukaryotic ribosome at 3.0 A resolution.</title>
        <authorList>
            <person name="Ben-Shem A."/>
            <person name="Garreau de Loubresse N."/>
            <person name="Melnikov S."/>
            <person name="Jenner L."/>
            <person name="Yusupova G."/>
            <person name="Yusupov M."/>
        </authorList>
    </citation>
    <scope>SUBUNIT</scope>
    <scope>SUBCELLULAR LOCATION</scope>
</reference>
<reference key="12">
    <citation type="journal article" date="2014" name="Curr. Opin. Struct. Biol.">
        <title>A new system for naming ribosomal proteins.</title>
        <authorList>
            <person name="Ban N."/>
            <person name="Beckmann R."/>
            <person name="Cate J.H.D."/>
            <person name="Dinman J.D."/>
            <person name="Dragon F."/>
            <person name="Ellis S.R."/>
            <person name="Lafontaine D.L.J."/>
            <person name="Lindahl L."/>
            <person name="Liljas A."/>
            <person name="Lipton J.M."/>
            <person name="McAlear M.A."/>
            <person name="Moore P.B."/>
            <person name="Noller H.F."/>
            <person name="Ortega J."/>
            <person name="Panse V.G."/>
            <person name="Ramakrishnan V."/>
            <person name="Spahn C.M.T."/>
            <person name="Steitz T.A."/>
            <person name="Tchorzewski M."/>
            <person name="Tollervey D."/>
            <person name="Warren A.J."/>
            <person name="Williamson J.R."/>
            <person name="Wilson D."/>
            <person name="Yonath A."/>
            <person name="Yusupov M."/>
        </authorList>
    </citation>
    <scope>NOMENCLATURE</scope>
</reference>
<reference key="13">
    <citation type="journal article" date="2001" name="Cell">
        <title>Structure of the 80S ribosome from Saccharomyces cerevisiae -- tRNA-ribosome and subunit-subunit interactions.</title>
        <authorList>
            <person name="Spahn C.M.T."/>
            <person name="Beckmann R."/>
            <person name="Eswar N."/>
            <person name="Penczek P.A."/>
            <person name="Sali A."/>
            <person name="Blobel G."/>
            <person name="Frank J."/>
        </authorList>
    </citation>
    <scope>3D-STRUCTURE MODELING OF 21-49</scope>
    <scope>ELECTRON MICROSCOPY</scope>
</reference>
<reference key="14">
    <citation type="journal article" date="2004" name="EMBO J.">
        <title>Domain movements of elongation factor eEF2 and the eukaryotic 80S ribosome facilitate tRNA translocation.</title>
        <authorList>
            <person name="Spahn C.M.T."/>
            <person name="Gomez-Lorenzo M.G."/>
            <person name="Grassucci R.A."/>
            <person name="Joergensen R."/>
            <person name="Andersen G.R."/>
            <person name="Beckmann R."/>
            <person name="Penczek P.A."/>
            <person name="Ballesta J.P.G."/>
            <person name="Frank J."/>
        </authorList>
    </citation>
    <scope>3D-STRUCTURE MODELING OF 21-56</scope>
    <scope>ELECTRON MICROSCOPY</scope>
</reference>
<accession>P41058</accession>
<accession>A2TBP5</accession>
<accession>D6VRT5</accession>
<accession>P05761</accession>
<protein>
    <recommendedName>
        <fullName evidence="7">Small ribosomal subunit protein uS14B</fullName>
    </recommendedName>
    <alternativeName>
        <fullName evidence="8">40S ribosomal protein S29-B</fullName>
    </alternativeName>
    <alternativeName>
        <fullName>S36</fullName>
    </alternativeName>
    <alternativeName>
        <fullName>YS29</fullName>
    </alternativeName>
</protein>
<keyword id="KW-0002">3D-structure</keyword>
<keyword id="KW-0963">Cytoplasm</keyword>
<keyword id="KW-0903">Direct protein sequencing</keyword>
<keyword id="KW-0479">Metal-binding</keyword>
<keyword id="KW-0597">Phosphoprotein</keyword>
<keyword id="KW-1185">Reference proteome</keyword>
<keyword id="KW-0687">Ribonucleoprotein</keyword>
<keyword id="KW-0689">Ribosomal protein</keyword>
<keyword id="KW-0862">Zinc</keyword>
<sequence length="56" mass="6728">MAHENVWFSHPRRFGKGSRQCRVCSSHTGLVRKYDLNICRQCFREKANDIGFHKYR</sequence>